<proteinExistence type="inferred from homology"/>
<organism>
    <name type="scientific">Dipodomys compactus</name>
    <name type="common">Gulf coast kangaroo rat</name>
    <dbReference type="NCBI Taxonomy" id="323378"/>
    <lineage>
        <taxon>Eukaryota</taxon>
        <taxon>Metazoa</taxon>
        <taxon>Chordata</taxon>
        <taxon>Craniata</taxon>
        <taxon>Vertebrata</taxon>
        <taxon>Euteleostomi</taxon>
        <taxon>Mammalia</taxon>
        <taxon>Eutheria</taxon>
        <taxon>Euarchontoglires</taxon>
        <taxon>Glires</taxon>
        <taxon>Rodentia</taxon>
        <taxon>Castorimorpha</taxon>
        <taxon>Heteromyidae</taxon>
        <taxon>Dipodomyinae</taxon>
        <taxon>Dipodomys</taxon>
    </lineage>
</organism>
<reference key="1">
    <citation type="journal article" date="2005" name="J. Mammal.">
        <title>Phylogenetics of the new world rodent family Heteromyidae.</title>
        <authorList>
            <person name="Alexander L.F."/>
            <person name="Riddle B.R."/>
        </authorList>
    </citation>
    <scope>NUCLEOTIDE SEQUENCE [GENOMIC DNA]</scope>
    <source>
        <strain>Isolate LVT 2060</strain>
    </source>
</reference>
<feature type="chain" id="PRO_0000255036" description="Cytochrome b">
    <location>
        <begin position="1"/>
        <end position="379"/>
    </location>
</feature>
<feature type="transmembrane region" description="Helical" evidence="2">
    <location>
        <begin position="33"/>
        <end position="53"/>
    </location>
</feature>
<feature type="transmembrane region" description="Helical" evidence="2">
    <location>
        <begin position="77"/>
        <end position="98"/>
    </location>
</feature>
<feature type="transmembrane region" description="Helical" evidence="2">
    <location>
        <begin position="113"/>
        <end position="133"/>
    </location>
</feature>
<feature type="transmembrane region" description="Helical" evidence="2">
    <location>
        <begin position="178"/>
        <end position="198"/>
    </location>
</feature>
<feature type="transmembrane region" description="Helical" evidence="2">
    <location>
        <begin position="226"/>
        <end position="246"/>
    </location>
</feature>
<feature type="transmembrane region" description="Helical" evidence="2">
    <location>
        <begin position="288"/>
        <end position="308"/>
    </location>
</feature>
<feature type="transmembrane region" description="Helical" evidence="2">
    <location>
        <begin position="320"/>
        <end position="340"/>
    </location>
</feature>
<feature type="transmembrane region" description="Helical" evidence="2">
    <location>
        <begin position="347"/>
        <end position="367"/>
    </location>
</feature>
<feature type="binding site" description="axial binding residue" evidence="2">
    <location>
        <position position="83"/>
    </location>
    <ligand>
        <name>heme b</name>
        <dbReference type="ChEBI" id="CHEBI:60344"/>
        <label>b562</label>
    </ligand>
    <ligandPart>
        <name>Fe</name>
        <dbReference type="ChEBI" id="CHEBI:18248"/>
    </ligandPart>
</feature>
<feature type="binding site" description="axial binding residue" evidence="2">
    <location>
        <position position="97"/>
    </location>
    <ligand>
        <name>heme b</name>
        <dbReference type="ChEBI" id="CHEBI:60344"/>
        <label>b566</label>
    </ligand>
    <ligandPart>
        <name>Fe</name>
        <dbReference type="ChEBI" id="CHEBI:18248"/>
    </ligandPart>
</feature>
<feature type="binding site" description="axial binding residue" evidence="2">
    <location>
        <position position="182"/>
    </location>
    <ligand>
        <name>heme b</name>
        <dbReference type="ChEBI" id="CHEBI:60344"/>
        <label>b562</label>
    </ligand>
    <ligandPart>
        <name>Fe</name>
        <dbReference type="ChEBI" id="CHEBI:18248"/>
    </ligandPart>
</feature>
<feature type="binding site" description="axial binding residue" evidence="2">
    <location>
        <position position="196"/>
    </location>
    <ligand>
        <name>heme b</name>
        <dbReference type="ChEBI" id="CHEBI:60344"/>
        <label>b566</label>
    </ligand>
    <ligandPart>
        <name>Fe</name>
        <dbReference type="ChEBI" id="CHEBI:18248"/>
    </ligandPart>
</feature>
<feature type="binding site" evidence="2">
    <location>
        <position position="201"/>
    </location>
    <ligand>
        <name>a ubiquinone</name>
        <dbReference type="ChEBI" id="CHEBI:16389"/>
    </ligand>
</feature>
<evidence type="ECO:0000250" key="1"/>
<evidence type="ECO:0000250" key="2">
    <source>
        <dbReference type="UniProtKB" id="P00157"/>
    </source>
</evidence>
<evidence type="ECO:0000255" key="3">
    <source>
        <dbReference type="PROSITE-ProRule" id="PRU00967"/>
    </source>
</evidence>
<evidence type="ECO:0000255" key="4">
    <source>
        <dbReference type="PROSITE-ProRule" id="PRU00968"/>
    </source>
</evidence>
<dbReference type="EMBL" id="AY926379">
    <property type="protein sequence ID" value="AAY23222.1"/>
    <property type="molecule type" value="Genomic_DNA"/>
</dbReference>
<dbReference type="SMR" id="Q508M4"/>
<dbReference type="GO" id="GO:0005743">
    <property type="term" value="C:mitochondrial inner membrane"/>
    <property type="evidence" value="ECO:0007669"/>
    <property type="project" value="UniProtKB-SubCell"/>
</dbReference>
<dbReference type="GO" id="GO:0045275">
    <property type="term" value="C:respiratory chain complex III"/>
    <property type="evidence" value="ECO:0007669"/>
    <property type="project" value="InterPro"/>
</dbReference>
<dbReference type="GO" id="GO:0046872">
    <property type="term" value="F:metal ion binding"/>
    <property type="evidence" value="ECO:0007669"/>
    <property type="project" value="UniProtKB-KW"/>
</dbReference>
<dbReference type="GO" id="GO:0008121">
    <property type="term" value="F:ubiquinol-cytochrome-c reductase activity"/>
    <property type="evidence" value="ECO:0007669"/>
    <property type="project" value="InterPro"/>
</dbReference>
<dbReference type="GO" id="GO:0006122">
    <property type="term" value="P:mitochondrial electron transport, ubiquinol to cytochrome c"/>
    <property type="evidence" value="ECO:0007669"/>
    <property type="project" value="TreeGrafter"/>
</dbReference>
<dbReference type="CDD" id="cd00290">
    <property type="entry name" value="cytochrome_b_C"/>
    <property type="match status" value="1"/>
</dbReference>
<dbReference type="CDD" id="cd00284">
    <property type="entry name" value="Cytochrome_b_N"/>
    <property type="match status" value="1"/>
</dbReference>
<dbReference type="FunFam" id="1.20.810.10:FF:000002">
    <property type="entry name" value="Cytochrome b"/>
    <property type="match status" value="1"/>
</dbReference>
<dbReference type="Gene3D" id="1.20.810.10">
    <property type="entry name" value="Cytochrome Bc1 Complex, Chain C"/>
    <property type="match status" value="1"/>
</dbReference>
<dbReference type="InterPro" id="IPR005798">
    <property type="entry name" value="Cyt_b/b6_C"/>
</dbReference>
<dbReference type="InterPro" id="IPR036150">
    <property type="entry name" value="Cyt_b/b6_C_sf"/>
</dbReference>
<dbReference type="InterPro" id="IPR005797">
    <property type="entry name" value="Cyt_b/b6_N"/>
</dbReference>
<dbReference type="InterPro" id="IPR027387">
    <property type="entry name" value="Cytb/b6-like_sf"/>
</dbReference>
<dbReference type="InterPro" id="IPR030689">
    <property type="entry name" value="Cytochrome_b"/>
</dbReference>
<dbReference type="InterPro" id="IPR048260">
    <property type="entry name" value="Cytochrome_b_C_euk/bac"/>
</dbReference>
<dbReference type="InterPro" id="IPR048259">
    <property type="entry name" value="Cytochrome_b_N_euk/bac"/>
</dbReference>
<dbReference type="InterPro" id="IPR016174">
    <property type="entry name" value="Di-haem_cyt_TM"/>
</dbReference>
<dbReference type="PANTHER" id="PTHR19271">
    <property type="entry name" value="CYTOCHROME B"/>
    <property type="match status" value="1"/>
</dbReference>
<dbReference type="PANTHER" id="PTHR19271:SF16">
    <property type="entry name" value="CYTOCHROME B"/>
    <property type="match status" value="1"/>
</dbReference>
<dbReference type="Pfam" id="PF00032">
    <property type="entry name" value="Cytochrom_B_C"/>
    <property type="match status" value="1"/>
</dbReference>
<dbReference type="Pfam" id="PF00033">
    <property type="entry name" value="Cytochrome_B"/>
    <property type="match status" value="1"/>
</dbReference>
<dbReference type="PIRSF" id="PIRSF038885">
    <property type="entry name" value="COB"/>
    <property type="match status" value="1"/>
</dbReference>
<dbReference type="SUPFAM" id="SSF81648">
    <property type="entry name" value="a domain/subunit of cytochrome bc1 complex (Ubiquinol-cytochrome c reductase)"/>
    <property type="match status" value="1"/>
</dbReference>
<dbReference type="SUPFAM" id="SSF81342">
    <property type="entry name" value="Transmembrane di-heme cytochromes"/>
    <property type="match status" value="1"/>
</dbReference>
<dbReference type="PROSITE" id="PS51003">
    <property type="entry name" value="CYTB_CTER"/>
    <property type="match status" value="1"/>
</dbReference>
<dbReference type="PROSITE" id="PS51002">
    <property type="entry name" value="CYTB_NTER"/>
    <property type="match status" value="1"/>
</dbReference>
<comment type="function">
    <text evidence="2">Component of the ubiquinol-cytochrome c reductase complex (complex III or cytochrome b-c1 complex) that is part of the mitochondrial respiratory chain. The b-c1 complex mediates electron transfer from ubiquinol to cytochrome c. Contributes to the generation of a proton gradient across the mitochondrial membrane that is then used for ATP synthesis.</text>
</comment>
<comment type="cofactor">
    <cofactor evidence="2">
        <name>heme b</name>
        <dbReference type="ChEBI" id="CHEBI:60344"/>
    </cofactor>
    <text evidence="2">Binds 2 heme b groups non-covalently.</text>
</comment>
<comment type="subunit">
    <text evidence="2">The cytochrome bc1 complex contains 11 subunits: 3 respiratory subunits (MT-CYB, CYC1 and UQCRFS1), 2 core proteins (UQCRC1 and UQCRC2) and 6 low-molecular weight proteins (UQCRH/QCR6, UQCRB/QCR7, UQCRQ/QCR8, UQCR10/QCR9, UQCR11/QCR10 and a cleavage product of UQCRFS1). This cytochrome bc1 complex then forms a dimer.</text>
</comment>
<comment type="subcellular location">
    <subcellularLocation>
        <location evidence="2">Mitochondrion inner membrane</location>
        <topology evidence="2">Multi-pass membrane protein</topology>
    </subcellularLocation>
</comment>
<comment type="miscellaneous">
    <text evidence="1">Heme 1 (or BL or b562) is low-potential and absorbs at about 562 nm, and heme 2 (or BH or b566) is high-potential and absorbs at about 566 nm.</text>
</comment>
<comment type="similarity">
    <text evidence="3 4">Belongs to the cytochrome b family.</text>
</comment>
<comment type="caution">
    <text evidence="2">The full-length protein contains only eight transmembrane helices, not nine as predicted by bioinformatics tools.</text>
</comment>
<accession>Q508M4</accession>
<sequence length="379" mass="42906">MTIMRKTHPLMKMVNHAFIDLPAPSNISGWWNFGSLLGLCLVIQITSGLFLAMHYTPDTLTAFSSVTHICRDVNYGWLIRYMHANGASLFFICLYLHIGRGIYYGSYSYMETWNIGILLLFLTMATAFMGYVLPWGQMSFWGATVITNLLSAIPYIGTDLVEWIWGGFSVDKATLNRFFAFHFILPFIIAAMAMVHLLFLHETGSNNPLGIPSDCDKIPFHPYYTTKDLLGIILLMAFFFTLVLFFPDLLGDPDNYSPANPLNTPPHIKPEWYFLFAYAILRSIPNKLGGVIALVLSILILALLPHIQTAKQRSLMFRPISQFLFWLLVSDVLALTWIGGQPVEPPFIIIGQIASFLYFAIILILMPIAGIIENKMLKW</sequence>
<gene>
    <name type="primary">MT-CYB</name>
    <name type="synonym">COB</name>
    <name type="synonym">CYTB</name>
    <name type="synonym">MTCYB</name>
</gene>
<name>CYB_DIPCO</name>
<geneLocation type="mitochondrion"/>
<protein>
    <recommendedName>
        <fullName>Cytochrome b</fullName>
    </recommendedName>
    <alternativeName>
        <fullName>Complex III subunit 3</fullName>
    </alternativeName>
    <alternativeName>
        <fullName>Complex III subunit III</fullName>
    </alternativeName>
    <alternativeName>
        <fullName>Cytochrome b-c1 complex subunit 3</fullName>
    </alternativeName>
    <alternativeName>
        <fullName>Ubiquinol-cytochrome-c reductase complex cytochrome b subunit</fullName>
    </alternativeName>
</protein>
<keyword id="KW-0249">Electron transport</keyword>
<keyword id="KW-0349">Heme</keyword>
<keyword id="KW-0408">Iron</keyword>
<keyword id="KW-0472">Membrane</keyword>
<keyword id="KW-0479">Metal-binding</keyword>
<keyword id="KW-0496">Mitochondrion</keyword>
<keyword id="KW-0999">Mitochondrion inner membrane</keyword>
<keyword id="KW-0679">Respiratory chain</keyword>
<keyword id="KW-0812">Transmembrane</keyword>
<keyword id="KW-1133">Transmembrane helix</keyword>
<keyword id="KW-0813">Transport</keyword>
<keyword id="KW-0830">Ubiquinone</keyword>